<name>RLMI_KLEP3</name>
<feature type="chain" id="PRO_0000366234" description="Ribosomal RNA large subunit methyltransferase I">
    <location>
        <begin position="1"/>
        <end position="400"/>
    </location>
</feature>
<feature type="domain" description="PUA" evidence="1">
    <location>
        <begin position="6"/>
        <end position="84"/>
    </location>
</feature>
<proteinExistence type="inferred from homology"/>
<protein>
    <recommendedName>
        <fullName evidence="1">Ribosomal RNA large subunit methyltransferase I</fullName>
        <ecNumber evidence="1">2.1.1.191</ecNumber>
    </recommendedName>
    <alternativeName>
        <fullName evidence="1">23S rRNA m5C1962 methyltransferase</fullName>
    </alternativeName>
    <alternativeName>
        <fullName evidence="1">rRNA (cytosine-C(5)-)-methyltransferase RlmI</fullName>
    </alternativeName>
</protein>
<comment type="function">
    <text evidence="1">Specifically methylates the cytosine at position 1962 (m5C1962) of 23S rRNA.</text>
</comment>
<comment type="catalytic activity">
    <reaction evidence="1">
        <text>cytidine(1962) in 23S rRNA + S-adenosyl-L-methionine = 5-methylcytidine(1962) in 23S rRNA + S-adenosyl-L-homocysteine + H(+)</text>
        <dbReference type="Rhea" id="RHEA:42912"/>
        <dbReference type="Rhea" id="RHEA-COMP:10382"/>
        <dbReference type="Rhea" id="RHEA-COMP:10386"/>
        <dbReference type="ChEBI" id="CHEBI:15378"/>
        <dbReference type="ChEBI" id="CHEBI:57856"/>
        <dbReference type="ChEBI" id="CHEBI:59789"/>
        <dbReference type="ChEBI" id="CHEBI:74483"/>
        <dbReference type="ChEBI" id="CHEBI:82748"/>
        <dbReference type="EC" id="2.1.1.191"/>
    </reaction>
</comment>
<comment type="subcellular location">
    <subcellularLocation>
        <location evidence="1">Cytoplasm</location>
    </subcellularLocation>
</comment>
<comment type="similarity">
    <text evidence="1">Belongs to the methyltransferase superfamily. RlmI family.</text>
</comment>
<comment type="sequence caution" evidence="2">
    <conflict type="erroneous initiation">
        <sequence resource="EMBL-CDS" id="ACI10309"/>
    </conflict>
</comment>
<keyword id="KW-0963">Cytoplasm</keyword>
<keyword id="KW-0489">Methyltransferase</keyword>
<keyword id="KW-0694">RNA-binding</keyword>
<keyword id="KW-0698">rRNA processing</keyword>
<keyword id="KW-0949">S-adenosyl-L-methionine</keyword>
<keyword id="KW-0808">Transferase</keyword>
<evidence type="ECO:0000255" key="1">
    <source>
        <dbReference type="HAMAP-Rule" id="MF_01857"/>
    </source>
</evidence>
<evidence type="ECO:0000305" key="2"/>
<sequence length="400" mass="44659">MTDSLFPRLVLAKGREKSLLRRHPWIFSGGVARMEGKARSGETIDIVDHQGKWLARGAYSPSSQIRARVWTFDRNEAIDSAFFERRLQQAQTWRAWLAERDGLDSYRLIAGESDGLPGVTIDRFGNFFVLQLLSAGAEYQRAAIISALQNLFPDCAIYDRSDVAVRKKEGLELAQGPVVGELPPALLPITEHGMKLLVDIQGGHKTGYYLDQRDSRLATRRYVADKRVLNCFSYTGGFAVSALMGGCRQVTSVDTSQEALDVARQNVELNGLDLSKAEFVRDDVFKLLRKYRDQGEKFDVIVMDPPKFVENKSQLMGACRGYKDINMLAIQLLNPGGVLLTFSCSGLMTTDLFQKIIADAAIDAGRDVQFIEQFRQAADHPVIATYPEGLYLKGFACRVM</sequence>
<reference key="1">
    <citation type="journal article" date="2008" name="PLoS Genet.">
        <title>Complete genome sequence of the N2-fixing broad host range endophyte Klebsiella pneumoniae 342 and virulence predictions verified in mice.</title>
        <authorList>
            <person name="Fouts D.E."/>
            <person name="Tyler H.L."/>
            <person name="DeBoy R.T."/>
            <person name="Daugherty S."/>
            <person name="Ren Q."/>
            <person name="Badger J.H."/>
            <person name="Durkin A.S."/>
            <person name="Huot H."/>
            <person name="Shrivastava S."/>
            <person name="Kothari S."/>
            <person name="Dodson R.J."/>
            <person name="Mohamoud Y."/>
            <person name="Khouri H."/>
            <person name="Roesch L.F.W."/>
            <person name="Krogfelt K.A."/>
            <person name="Struve C."/>
            <person name="Triplett E.W."/>
            <person name="Methe B.A."/>
        </authorList>
    </citation>
    <scope>NUCLEOTIDE SEQUENCE [LARGE SCALE GENOMIC DNA]</scope>
    <source>
        <strain>342</strain>
    </source>
</reference>
<organism>
    <name type="scientific">Klebsiella pneumoniae (strain 342)</name>
    <dbReference type="NCBI Taxonomy" id="507522"/>
    <lineage>
        <taxon>Bacteria</taxon>
        <taxon>Pseudomonadati</taxon>
        <taxon>Pseudomonadota</taxon>
        <taxon>Gammaproteobacteria</taxon>
        <taxon>Enterobacterales</taxon>
        <taxon>Enterobacteriaceae</taxon>
        <taxon>Klebsiella/Raoultella group</taxon>
        <taxon>Klebsiella</taxon>
        <taxon>Klebsiella pneumoniae complex</taxon>
    </lineage>
</organism>
<gene>
    <name evidence="1" type="primary">rlmI</name>
    <name type="ordered locus">KPK_3573</name>
</gene>
<accession>B5XY38</accession>
<dbReference type="EC" id="2.1.1.191" evidence="1"/>
<dbReference type="EMBL" id="CP000964">
    <property type="protein sequence ID" value="ACI10309.1"/>
    <property type="status" value="ALT_INIT"/>
    <property type="molecule type" value="Genomic_DNA"/>
</dbReference>
<dbReference type="SMR" id="B5XY38"/>
<dbReference type="KEGG" id="kpe:KPK_3573"/>
<dbReference type="HOGENOM" id="CLU_014042_0_0_6"/>
<dbReference type="Proteomes" id="UP000001734">
    <property type="component" value="Chromosome"/>
</dbReference>
<dbReference type="GO" id="GO:0005737">
    <property type="term" value="C:cytoplasm"/>
    <property type="evidence" value="ECO:0007669"/>
    <property type="project" value="UniProtKB-SubCell"/>
</dbReference>
<dbReference type="GO" id="GO:0003723">
    <property type="term" value="F:RNA binding"/>
    <property type="evidence" value="ECO:0007669"/>
    <property type="project" value="UniProtKB-KW"/>
</dbReference>
<dbReference type="GO" id="GO:0016434">
    <property type="term" value="F:rRNA (cytosine) methyltransferase activity"/>
    <property type="evidence" value="ECO:0007669"/>
    <property type="project" value="UniProtKB-UniRule"/>
</dbReference>
<dbReference type="CDD" id="cd02440">
    <property type="entry name" value="AdoMet_MTases"/>
    <property type="match status" value="1"/>
</dbReference>
<dbReference type="CDD" id="cd21153">
    <property type="entry name" value="PUA_RlmI"/>
    <property type="match status" value="1"/>
</dbReference>
<dbReference type="CDD" id="cd11572">
    <property type="entry name" value="RlmI_M_like"/>
    <property type="match status" value="1"/>
</dbReference>
<dbReference type="FunFam" id="3.40.50.150:FF:000044">
    <property type="entry name" value="Ribosomal RNA large subunit methyltransferase I"/>
    <property type="match status" value="1"/>
</dbReference>
<dbReference type="Gene3D" id="2.30.130.10">
    <property type="entry name" value="PUA domain"/>
    <property type="match status" value="1"/>
</dbReference>
<dbReference type="Gene3D" id="3.30.750.80">
    <property type="entry name" value="RNA methyltransferase domain (HRMD) like"/>
    <property type="match status" value="1"/>
</dbReference>
<dbReference type="Gene3D" id="3.40.50.150">
    <property type="entry name" value="Vaccinia Virus protein VP39"/>
    <property type="match status" value="1"/>
</dbReference>
<dbReference type="HAMAP" id="MF_01857">
    <property type="entry name" value="23SrRNA_methyltr_I"/>
    <property type="match status" value="1"/>
</dbReference>
<dbReference type="InterPro" id="IPR002478">
    <property type="entry name" value="PUA"/>
</dbReference>
<dbReference type="InterPro" id="IPR015947">
    <property type="entry name" value="PUA-like_sf"/>
</dbReference>
<dbReference type="InterPro" id="IPR036974">
    <property type="entry name" value="PUA_sf"/>
</dbReference>
<dbReference type="InterPro" id="IPR023542">
    <property type="entry name" value="RLMI"/>
</dbReference>
<dbReference type="InterPro" id="IPR041532">
    <property type="entry name" value="RlmI-like_PUA"/>
</dbReference>
<dbReference type="InterPro" id="IPR019614">
    <property type="entry name" value="SAM-dep_methyl-trfase"/>
</dbReference>
<dbReference type="InterPro" id="IPR029063">
    <property type="entry name" value="SAM-dependent_MTases_sf"/>
</dbReference>
<dbReference type="NCBIfam" id="NF011707">
    <property type="entry name" value="PRK15128.1"/>
    <property type="match status" value="1"/>
</dbReference>
<dbReference type="PANTHER" id="PTHR42873">
    <property type="entry name" value="RIBOSOMAL RNA LARGE SUBUNIT METHYLTRANSFERASE"/>
    <property type="match status" value="1"/>
</dbReference>
<dbReference type="PANTHER" id="PTHR42873:SF1">
    <property type="entry name" value="S-ADENOSYLMETHIONINE-DEPENDENT METHYLTRANSFERASE DOMAIN-CONTAINING PROTEIN"/>
    <property type="match status" value="1"/>
</dbReference>
<dbReference type="Pfam" id="PF10672">
    <property type="entry name" value="Methyltrans_SAM"/>
    <property type="match status" value="1"/>
</dbReference>
<dbReference type="Pfam" id="PF17785">
    <property type="entry name" value="PUA_3"/>
    <property type="match status" value="1"/>
</dbReference>
<dbReference type="SMART" id="SM00359">
    <property type="entry name" value="PUA"/>
    <property type="match status" value="1"/>
</dbReference>
<dbReference type="SUPFAM" id="SSF88697">
    <property type="entry name" value="PUA domain-like"/>
    <property type="match status" value="1"/>
</dbReference>
<dbReference type="SUPFAM" id="SSF53335">
    <property type="entry name" value="S-adenosyl-L-methionine-dependent methyltransferases"/>
    <property type="match status" value="1"/>
</dbReference>
<dbReference type="PROSITE" id="PS50890">
    <property type="entry name" value="PUA"/>
    <property type="match status" value="1"/>
</dbReference>